<dbReference type="EMBL" id="AB034730">
    <property type="protein sequence ID" value="BAA92310.1"/>
    <property type="molecule type" value="mRNA"/>
</dbReference>
<dbReference type="EMBL" id="AK132597">
    <property type="protein sequence ID" value="BAE21253.1"/>
    <property type="molecule type" value="mRNA"/>
</dbReference>
<dbReference type="EMBL" id="AK149469">
    <property type="protein sequence ID" value="BAE28900.1"/>
    <property type="molecule type" value="mRNA"/>
</dbReference>
<dbReference type="CCDS" id="CCDS48391.1">
    <molecule id="Q9JM99-5"/>
</dbReference>
<dbReference type="RefSeq" id="NP_001103616.1">
    <property type="nucleotide sequence ID" value="NM_001110146.1"/>
</dbReference>
<dbReference type="SMR" id="Q9JM99"/>
<dbReference type="BioGRID" id="220515">
    <property type="interactions" value="4"/>
</dbReference>
<dbReference type="FunCoup" id="Q9JM99">
    <property type="interactions" value="218"/>
</dbReference>
<dbReference type="STRING" id="10090.ENSMUSP00000128943"/>
<dbReference type="GlyCosmos" id="Q9JM99">
    <property type="glycosylation" value="60 sites, No reported glycans"/>
</dbReference>
<dbReference type="GlyGen" id="Q9JM99">
    <property type="glycosylation" value="62 sites, 1 N-linked glycan (1 site), 1 O-linked glycan (1 site)"/>
</dbReference>
<dbReference type="iPTMnet" id="Q9JM99"/>
<dbReference type="PhosphoSitePlus" id="Q9JM99"/>
<dbReference type="CPTAC" id="non-CPTAC-3938"/>
<dbReference type="PeptideAtlas" id="Q9JM99"/>
<dbReference type="ProteomicsDB" id="291868">
    <molecule id="Q9JM99-1"/>
</dbReference>
<dbReference type="ProteomicsDB" id="291869">
    <molecule id="Q9JM99-2"/>
</dbReference>
<dbReference type="ProteomicsDB" id="291870">
    <molecule id="Q9JM99-3"/>
</dbReference>
<dbReference type="ProteomicsDB" id="291871">
    <molecule id="Q9JM99-4"/>
</dbReference>
<dbReference type="ProteomicsDB" id="291872">
    <molecule id="Q9JM99-5"/>
</dbReference>
<dbReference type="Pumba" id="Q9JM99"/>
<dbReference type="DNASU" id="96875"/>
<dbReference type="GeneID" id="96875"/>
<dbReference type="KEGG" id="mmu:96875"/>
<dbReference type="AGR" id="MGI:1891344"/>
<dbReference type="CTD" id="10216"/>
<dbReference type="MGI" id="MGI:1891344">
    <property type="gene designation" value="Prg4"/>
</dbReference>
<dbReference type="eggNOG" id="KOG1565">
    <property type="taxonomic scope" value="Eukaryota"/>
</dbReference>
<dbReference type="InParanoid" id="Q9JM99"/>
<dbReference type="OrthoDB" id="413699at2759"/>
<dbReference type="BioGRID-ORCS" id="96875">
    <property type="hits" value="4 hits in 75 CRISPR screens"/>
</dbReference>
<dbReference type="ChiTaRS" id="Prg4">
    <property type="organism name" value="mouse"/>
</dbReference>
<dbReference type="PRO" id="PR:Q9JM99"/>
<dbReference type="Proteomes" id="UP000000589">
    <property type="component" value="Unplaced"/>
</dbReference>
<dbReference type="RNAct" id="Q9JM99">
    <property type="molecule type" value="protein"/>
</dbReference>
<dbReference type="GO" id="GO:0005615">
    <property type="term" value="C:extracellular space"/>
    <property type="evidence" value="ECO:0000314"/>
    <property type="project" value="MGI"/>
</dbReference>
<dbReference type="GO" id="GO:0030247">
    <property type="term" value="F:polysaccharide binding"/>
    <property type="evidence" value="ECO:0007669"/>
    <property type="project" value="InterPro"/>
</dbReference>
<dbReference type="GO" id="GO:0005044">
    <property type="term" value="F:scavenger receptor activity"/>
    <property type="evidence" value="ECO:0007669"/>
    <property type="project" value="InterPro"/>
</dbReference>
<dbReference type="GO" id="GO:0071425">
    <property type="term" value="P:hematopoietic stem cell proliferation"/>
    <property type="evidence" value="ECO:0000315"/>
    <property type="project" value="MGI"/>
</dbReference>
<dbReference type="GO" id="GO:0006955">
    <property type="term" value="P:immune response"/>
    <property type="evidence" value="ECO:0007669"/>
    <property type="project" value="InterPro"/>
</dbReference>
<dbReference type="GO" id="GO:0032715">
    <property type="term" value="P:negative regulation of interleukin-6 production"/>
    <property type="evidence" value="ECO:0000315"/>
    <property type="project" value="MGI"/>
</dbReference>
<dbReference type="GO" id="GO:0042127">
    <property type="term" value="P:regulation of cell population proliferation"/>
    <property type="evidence" value="ECO:0000315"/>
    <property type="project" value="MGI"/>
</dbReference>
<dbReference type="CDD" id="cd00094">
    <property type="entry name" value="HX"/>
    <property type="match status" value="1"/>
</dbReference>
<dbReference type="Gene3D" id="4.10.410.20">
    <property type="match status" value="2"/>
</dbReference>
<dbReference type="Gene3D" id="2.110.10.10">
    <property type="entry name" value="Hemopexin-like domain"/>
    <property type="match status" value="1"/>
</dbReference>
<dbReference type="InterPro" id="IPR051298">
    <property type="entry name" value="Heme_transport/Cell_adhesion"/>
</dbReference>
<dbReference type="InterPro" id="IPR000585">
    <property type="entry name" value="Hemopexin-like_dom"/>
</dbReference>
<dbReference type="InterPro" id="IPR036375">
    <property type="entry name" value="Hemopexin-like_dom_sf"/>
</dbReference>
<dbReference type="InterPro" id="IPR018487">
    <property type="entry name" value="Hemopexin-like_repeat"/>
</dbReference>
<dbReference type="InterPro" id="IPR018486">
    <property type="entry name" value="Hemopexin_CS"/>
</dbReference>
<dbReference type="InterPro" id="IPR020436">
    <property type="entry name" value="SMB_chordata"/>
</dbReference>
<dbReference type="InterPro" id="IPR036024">
    <property type="entry name" value="Somatomedin_B-like_dom_sf"/>
</dbReference>
<dbReference type="InterPro" id="IPR001212">
    <property type="entry name" value="Somatomedin_B_dom"/>
</dbReference>
<dbReference type="PANTHER" id="PTHR22917">
    <property type="entry name" value="HEMOPEXIN DOMAIN-CONTAINING PROTEIN"/>
    <property type="match status" value="1"/>
</dbReference>
<dbReference type="PANTHER" id="PTHR22917:SF1">
    <property type="entry name" value="PROTEOGLYCAN 4"/>
    <property type="match status" value="1"/>
</dbReference>
<dbReference type="Pfam" id="PF02389">
    <property type="entry name" value="Cornifin"/>
    <property type="match status" value="3"/>
</dbReference>
<dbReference type="Pfam" id="PF00045">
    <property type="entry name" value="Hemopexin"/>
    <property type="match status" value="2"/>
</dbReference>
<dbReference type="Pfam" id="PF01033">
    <property type="entry name" value="Somatomedin_B"/>
    <property type="match status" value="2"/>
</dbReference>
<dbReference type="PRINTS" id="PR00022">
    <property type="entry name" value="SOMATOMEDINB"/>
</dbReference>
<dbReference type="SMART" id="SM00120">
    <property type="entry name" value="HX"/>
    <property type="match status" value="2"/>
</dbReference>
<dbReference type="SMART" id="SM00201">
    <property type="entry name" value="SO"/>
    <property type="match status" value="2"/>
</dbReference>
<dbReference type="SUPFAM" id="SSF50923">
    <property type="entry name" value="Hemopexin-like domain"/>
    <property type="match status" value="1"/>
</dbReference>
<dbReference type="SUPFAM" id="SSF90188">
    <property type="entry name" value="Somatomedin B domain"/>
    <property type="match status" value="2"/>
</dbReference>
<dbReference type="PROSITE" id="PS00024">
    <property type="entry name" value="HEMOPEXIN"/>
    <property type="match status" value="1"/>
</dbReference>
<dbReference type="PROSITE" id="PS51642">
    <property type="entry name" value="HEMOPEXIN_2"/>
    <property type="match status" value="2"/>
</dbReference>
<dbReference type="PROSITE" id="PS00524">
    <property type="entry name" value="SMB_1"/>
    <property type="match status" value="2"/>
</dbReference>
<dbReference type="PROSITE" id="PS50958">
    <property type="entry name" value="SMB_2"/>
    <property type="match status" value="2"/>
</dbReference>
<reference key="1">
    <citation type="journal article" date="2000" name="Cytogenet. Cell Genet.">
        <title>Isolation, characterization and mapping of the mouse and human PRG4 (proteoglycan 4) genes.</title>
        <authorList>
            <person name="Ikegawa S."/>
            <person name="Sano M."/>
            <person name="Koshizuka Y."/>
            <person name="Nakamura Y."/>
        </authorList>
    </citation>
    <scope>NUCLEOTIDE SEQUENCE [MRNA] (ISOFORM A)</scope>
    <scope>TISSUE SPECIFICITY</scope>
    <scope>IDENTIFICATION OF ISOFORMS B; C AND D</scope>
</reference>
<reference key="2">
    <citation type="journal article" date="2005" name="Science">
        <title>The transcriptional landscape of the mammalian genome.</title>
        <authorList>
            <person name="Carninci P."/>
            <person name="Kasukawa T."/>
            <person name="Katayama S."/>
            <person name="Gough J."/>
            <person name="Frith M.C."/>
            <person name="Maeda N."/>
            <person name="Oyama R."/>
            <person name="Ravasi T."/>
            <person name="Lenhard B."/>
            <person name="Wells C."/>
            <person name="Kodzius R."/>
            <person name="Shimokawa K."/>
            <person name="Bajic V.B."/>
            <person name="Brenner S.E."/>
            <person name="Batalov S."/>
            <person name="Forrest A.R."/>
            <person name="Zavolan M."/>
            <person name="Davis M.J."/>
            <person name="Wilming L.G."/>
            <person name="Aidinis V."/>
            <person name="Allen J.E."/>
            <person name="Ambesi-Impiombato A."/>
            <person name="Apweiler R."/>
            <person name="Aturaliya R.N."/>
            <person name="Bailey T.L."/>
            <person name="Bansal M."/>
            <person name="Baxter L."/>
            <person name="Beisel K.W."/>
            <person name="Bersano T."/>
            <person name="Bono H."/>
            <person name="Chalk A.M."/>
            <person name="Chiu K.P."/>
            <person name="Choudhary V."/>
            <person name="Christoffels A."/>
            <person name="Clutterbuck D.R."/>
            <person name="Crowe M.L."/>
            <person name="Dalla E."/>
            <person name="Dalrymple B.P."/>
            <person name="de Bono B."/>
            <person name="Della Gatta G."/>
            <person name="di Bernardo D."/>
            <person name="Down T."/>
            <person name="Engstrom P."/>
            <person name="Fagiolini M."/>
            <person name="Faulkner G."/>
            <person name="Fletcher C.F."/>
            <person name="Fukushima T."/>
            <person name="Furuno M."/>
            <person name="Futaki S."/>
            <person name="Gariboldi M."/>
            <person name="Georgii-Hemming P."/>
            <person name="Gingeras T.R."/>
            <person name="Gojobori T."/>
            <person name="Green R.E."/>
            <person name="Gustincich S."/>
            <person name="Harbers M."/>
            <person name="Hayashi Y."/>
            <person name="Hensch T.K."/>
            <person name="Hirokawa N."/>
            <person name="Hill D."/>
            <person name="Huminiecki L."/>
            <person name="Iacono M."/>
            <person name="Ikeo K."/>
            <person name="Iwama A."/>
            <person name="Ishikawa T."/>
            <person name="Jakt M."/>
            <person name="Kanapin A."/>
            <person name="Katoh M."/>
            <person name="Kawasawa Y."/>
            <person name="Kelso J."/>
            <person name="Kitamura H."/>
            <person name="Kitano H."/>
            <person name="Kollias G."/>
            <person name="Krishnan S.P."/>
            <person name="Kruger A."/>
            <person name="Kummerfeld S.K."/>
            <person name="Kurochkin I.V."/>
            <person name="Lareau L.F."/>
            <person name="Lazarevic D."/>
            <person name="Lipovich L."/>
            <person name="Liu J."/>
            <person name="Liuni S."/>
            <person name="McWilliam S."/>
            <person name="Madan Babu M."/>
            <person name="Madera M."/>
            <person name="Marchionni L."/>
            <person name="Matsuda H."/>
            <person name="Matsuzawa S."/>
            <person name="Miki H."/>
            <person name="Mignone F."/>
            <person name="Miyake S."/>
            <person name="Morris K."/>
            <person name="Mottagui-Tabar S."/>
            <person name="Mulder N."/>
            <person name="Nakano N."/>
            <person name="Nakauchi H."/>
            <person name="Ng P."/>
            <person name="Nilsson R."/>
            <person name="Nishiguchi S."/>
            <person name="Nishikawa S."/>
            <person name="Nori F."/>
            <person name="Ohara O."/>
            <person name="Okazaki Y."/>
            <person name="Orlando V."/>
            <person name="Pang K.C."/>
            <person name="Pavan W.J."/>
            <person name="Pavesi G."/>
            <person name="Pesole G."/>
            <person name="Petrovsky N."/>
            <person name="Piazza S."/>
            <person name="Reed J."/>
            <person name="Reid J.F."/>
            <person name="Ring B.Z."/>
            <person name="Ringwald M."/>
            <person name="Rost B."/>
            <person name="Ruan Y."/>
            <person name="Salzberg S.L."/>
            <person name="Sandelin A."/>
            <person name="Schneider C."/>
            <person name="Schoenbach C."/>
            <person name="Sekiguchi K."/>
            <person name="Semple C.A."/>
            <person name="Seno S."/>
            <person name="Sessa L."/>
            <person name="Sheng Y."/>
            <person name="Shibata Y."/>
            <person name="Shimada H."/>
            <person name="Shimada K."/>
            <person name="Silva D."/>
            <person name="Sinclair B."/>
            <person name="Sperling S."/>
            <person name="Stupka E."/>
            <person name="Sugiura K."/>
            <person name="Sultana R."/>
            <person name="Takenaka Y."/>
            <person name="Taki K."/>
            <person name="Tammoja K."/>
            <person name="Tan S.L."/>
            <person name="Tang S."/>
            <person name="Taylor M.S."/>
            <person name="Tegner J."/>
            <person name="Teichmann S.A."/>
            <person name="Ueda H.R."/>
            <person name="van Nimwegen E."/>
            <person name="Verardo R."/>
            <person name="Wei C.L."/>
            <person name="Yagi K."/>
            <person name="Yamanishi H."/>
            <person name="Zabarovsky E."/>
            <person name="Zhu S."/>
            <person name="Zimmer A."/>
            <person name="Hide W."/>
            <person name="Bult C."/>
            <person name="Grimmond S.M."/>
            <person name="Teasdale R.D."/>
            <person name="Liu E.T."/>
            <person name="Brusic V."/>
            <person name="Quackenbush J."/>
            <person name="Wahlestedt C."/>
            <person name="Mattick J.S."/>
            <person name="Hume D.A."/>
            <person name="Kai C."/>
            <person name="Sasaki D."/>
            <person name="Tomaru Y."/>
            <person name="Fukuda S."/>
            <person name="Kanamori-Katayama M."/>
            <person name="Suzuki M."/>
            <person name="Aoki J."/>
            <person name="Arakawa T."/>
            <person name="Iida J."/>
            <person name="Imamura K."/>
            <person name="Itoh M."/>
            <person name="Kato T."/>
            <person name="Kawaji H."/>
            <person name="Kawagashira N."/>
            <person name="Kawashima T."/>
            <person name="Kojima M."/>
            <person name="Kondo S."/>
            <person name="Konno H."/>
            <person name="Nakano K."/>
            <person name="Ninomiya N."/>
            <person name="Nishio T."/>
            <person name="Okada M."/>
            <person name="Plessy C."/>
            <person name="Shibata K."/>
            <person name="Shiraki T."/>
            <person name="Suzuki S."/>
            <person name="Tagami M."/>
            <person name="Waki K."/>
            <person name="Watahiki A."/>
            <person name="Okamura-Oho Y."/>
            <person name="Suzuki H."/>
            <person name="Kawai J."/>
            <person name="Hayashizaki Y."/>
        </authorList>
    </citation>
    <scope>NUCLEOTIDE SEQUENCE [LARGE SCALE MRNA] (ISOFORM E)</scope>
    <scope>NUCLEOTIDE SEQUENCE [LARGE SCALE MRNA] OF 572-1054</scope>
    <source>
        <strain>C57BL/6J</strain>
        <tissue>Head</tissue>
        <tissue>Liver</tissue>
    </source>
</reference>
<reference key="3">
    <citation type="journal article" date="2005" name="J. Clin. Invest.">
        <title>The secreted glycoprotein lubricin protects cartilage surfaces and inhibits synovial cell overgrowth.</title>
        <authorList>
            <person name="Rhee D.K."/>
            <person name="Marcelino J."/>
            <person name="Baker M."/>
            <person name="Gong Y."/>
            <person name="Smits P."/>
            <person name="Lefebvre V."/>
            <person name="Jay G.D."/>
            <person name="Stewart M."/>
            <person name="Wang H."/>
            <person name="Warman M.L."/>
            <person name="Carpten J.D."/>
        </authorList>
    </citation>
    <scope>FUNCTION</scope>
    <scope>TISSUE SPECIFICITY</scope>
    <scope>DEVELOPMENTAL STAGE</scope>
    <scope>DISRUPTION PHENOTYPE</scope>
</reference>
<reference key="4">
    <citation type="journal article" date="2005" name="J. Biol. Chem.">
        <title>Consequences of disease-causing mutations on lubricin protein synthesis, secretion, and post-translational processing.</title>
        <authorList>
            <person name="Rhee D.K."/>
            <person name="Marcelino J."/>
            <person name="Al-Mayouf S."/>
            <person name="Schelling D.K."/>
            <person name="Bartels C.F."/>
            <person name="Cui Y."/>
            <person name="Laxer R."/>
            <person name="Goldbach-Mansky R."/>
            <person name="Warman M.L."/>
        </authorList>
    </citation>
    <scope>PROTEOLYTIC PROCESSING</scope>
    <scope>DISULFIDE BOND</scope>
    <scope>MUTAGENESIS OF 949-ARG--ARG-955; 949-ARG--ARG-951; CYS-795; 851-CYS--CYS-853; CYS-930 AND CYS-1053</scope>
</reference>
<comment type="function">
    <text evidence="6">Plays a role in boundary lubrication within articulating joints. Prevents protein deposition onto cartilage from synovial fluid by controlling adhesion-dependent synovial growth and inhibiting the adhesion of synovial cells to the cartilage surface.</text>
</comment>
<comment type="subunit">
    <text evidence="7">Homodimer; disulfide-linked.</text>
</comment>
<comment type="subcellular location">
    <subcellularLocation>
        <location evidence="1">Secreted</location>
    </subcellularLocation>
</comment>
<comment type="alternative products">
    <event type="alternative splicing"/>
    <isoform>
        <id>Q9JM99-1</id>
        <name>A</name>
        <sequence type="displayed"/>
    </isoform>
    <isoform>
        <id>Q9JM99-2</id>
        <name>B</name>
        <sequence type="described" ref="VSP_016471"/>
    </isoform>
    <isoform>
        <id>Q9JM99-3</id>
        <name>C</name>
        <sequence type="described" ref="VSP_016472"/>
    </isoform>
    <isoform>
        <id>Q9JM99-4</id>
        <name>D</name>
        <sequence type="described" ref="VSP_016471 VSP_016472"/>
    </isoform>
    <isoform>
        <id>Q9JM99-5</id>
        <name>E</name>
        <sequence type="described" ref="VSP_016472 VSP_016473"/>
    </isoform>
</comment>
<comment type="tissue specificity">
    <text evidence="5 6">Highly expressed in cartilage, bone and liver and weakly expressed in heart, brain and muscle. Expressed in the surface chondrocytes and in synovial intimal cells. Isoform B is expressed in bone, small intestine, muscle, testis, heart, liver and lung. Isoform C and isoform D are widely expressed.</text>
</comment>
<comment type="developmental stage">
    <text evidence="6">First detected at the forming joint surface from 15.5 dpc, after cavitation has begun. At later stages of morphogenesis, strong expression is observed in cartilage surface cells (superficial zone chondocytes) and in the newly forming synovium.</text>
</comment>
<comment type="PTM">
    <text evidence="1">N-glycosylated.</text>
</comment>
<comment type="PTM">
    <text evidence="1">O-glycosylated; contains glycosaminoglycan chondroitin sulfate and keratan sulfate. O-glycosylated with sialylated oligosaccharides which are predominantly represented by the monosialylated core type I structure, NeuNAcalpha2-3Galbeta1-3GalNAc, with smaller amounts of disialylated O-glycans.</text>
</comment>
<comment type="PTM">
    <text evidence="7">The disulfide bond between Cys-795 and Cys-1053 is essential for protein cleavage.</text>
</comment>
<comment type="PTM">
    <text evidence="1">Proteolytically cleaved by cathepsin CTSG.</text>
</comment>
<comment type="disruption phenotype">
    <text evidence="6">Mice are viable and fertile. In the newborn period, their joints appear normal. The aged mice exhibit abnormal protein deposits on the cartilage surface and disappearance of underlying superficial zone chondrocytes. In addition to cartilage surface changes and subsequent cartilage deterioration, intimal cells in the synovium surrounding the joint space become hyperplastic, which further contribute to joint failure.</text>
</comment>
<comment type="miscellaneous">
    <text>Different forms varying in molecular weight have been observed. Such forms are possibly due to different levels of glycosylation and protein cleavage.</text>
</comment>
<feature type="signal peptide" evidence="2">
    <location>
        <begin position="1"/>
        <end position="24"/>
    </location>
</feature>
<feature type="chain" id="PRO_0000043234" description="Proteoglycan 4">
    <location>
        <begin position="25"/>
        <end position="1054"/>
    </location>
</feature>
<feature type="chain" id="PRO_0000043235" description="Proteoglycan 4 C-terminal part">
    <location>
        <begin position="956"/>
        <end position="1054"/>
    </location>
</feature>
<feature type="domain" description="SMB 1" evidence="3">
    <location>
        <begin position="26"/>
        <end position="69"/>
    </location>
</feature>
<feature type="domain" description="SMB 2" evidence="3">
    <location>
        <begin position="66"/>
        <end position="108"/>
    </location>
</feature>
<feature type="repeat" description="1; approximate">
    <location>
        <begin position="317"/>
        <end position="324"/>
    </location>
</feature>
<feature type="repeat" description="2; approximate">
    <location>
        <begin position="325"/>
        <end position="332"/>
    </location>
</feature>
<feature type="repeat" description="3; approximate">
    <location>
        <begin position="333"/>
        <end position="340"/>
    </location>
</feature>
<feature type="repeat" description="4; approximate">
    <location>
        <begin position="349"/>
        <end position="356"/>
    </location>
</feature>
<feature type="repeat" description="5">
    <location>
        <begin position="357"/>
        <end position="364"/>
    </location>
</feature>
<feature type="repeat" description="6; approximate">
    <location>
        <begin position="365"/>
        <end position="371"/>
    </location>
</feature>
<feature type="repeat" description="7">
    <location>
        <begin position="372"/>
        <end position="379"/>
    </location>
</feature>
<feature type="repeat" description="8">
    <location>
        <begin position="380"/>
        <end position="387"/>
    </location>
</feature>
<feature type="repeat" description="9">
    <location>
        <begin position="388"/>
        <end position="395"/>
    </location>
</feature>
<feature type="repeat" description="10">
    <location>
        <begin position="396"/>
        <end position="403"/>
    </location>
</feature>
<feature type="repeat" description="11">
    <location>
        <begin position="404"/>
        <end position="411"/>
    </location>
</feature>
<feature type="repeat" description="12; approximate">
    <location>
        <begin position="412"/>
        <end position="418"/>
    </location>
</feature>
<feature type="repeat" description="13">
    <location>
        <begin position="419"/>
        <end position="426"/>
    </location>
</feature>
<feature type="repeat" description="14">
    <location>
        <begin position="427"/>
        <end position="434"/>
    </location>
</feature>
<feature type="repeat" description="15">
    <location>
        <begin position="435"/>
        <end position="442"/>
    </location>
</feature>
<feature type="repeat" description="16; approximate">
    <location>
        <begin position="443"/>
        <end position="450"/>
    </location>
</feature>
<feature type="repeat" description="17">
    <location>
        <begin position="451"/>
        <end position="458"/>
    </location>
</feature>
<feature type="repeat" description="18">
    <location>
        <begin position="459"/>
        <end position="466"/>
    </location>
</feature>
<feature type="repeat" description="19">
    <location>
        <begin position="467"/>
        <end position="474"/>
    </location>
</feature>
<feature type="repeat" description="20">
    <location>
        <begin position="475"/>
        <end position="482"/>
    </location>
</feature>
<feature type="repeat" description="21">
    <location>
        <begin position="483"/>
        <end position="490"/>
    </location>
</feature>
<feature type="repeat" description="22">
    <location>
        <begin position="491"/>
        <end position="498"/>
    </location>
</feature>
<feature type="repeat" description="23">
    <location>
        <begin position="499"/>
        <end position="506"/>
    </location>
</feature>
<feature type="repeat" description="24">
    <location>
        <begin position="507"/>
        <end position="514"/>
    </location>
</feature>
<feature type="repeat" description="25">
    <location>
        <begin position="515"/>
        <end position="522"/>
    </location>
</feature>
<feature type="repeat" description="26">
    <location>
        <begin position="523"/>
        <end position="530"/>
    </location>
</feature>
<feature type="repeat" description="27">
    <location>
        <begin position="531"/>
        <end position="538"/>
    </location>
</feature>
<feature type="repeat" description="28">
    <location>
        <begin position="539"/>
        <end position="546"/>
    </location>
</feature>
<feature type="repeat" description="29">
    <location>
        <begin position="547"/>
        <end position="554"/>
    </location>
</feature>
<feature type="repeat" description="30">
    <location>
        <begin position="555"/>
        <end position="562"/>
    </location>
</feature>
<feature type="repeat" description="31">
    <location>
        <begin position="563"/>
        <end position="570"/>
    </location>
</feature>
<feature type="repeat" description="32">
    <location>
        <begin position="571"/>
        <end position="578"/>
    </location>
</feature>
<feature type="repeat" description="33">
    <location>
        <begin position="579"/>
        <end position="586"/>
    </location>
</feature>
<feature type="repeat" description="34">
    <location>
        <begin position="587"/>
        <end position="594"/>
    </location>
</feature>
<feature type="repeat" description="35">
    <location>
        <begin position="595"/>
        <end position="602"/>
    </location>
</feature>
<feature type="repeat" description="36">
    <location>
        <begin position="603"/>
        <end position="610"/>
    </location>
</feature>
<feature type="repeat" description="37">
    <location>
        <begin position="611"/>
        <end position="618"/>
    </location>
</feature>
<feature type="repeat" description="Hemopexin 1">
    <location>
        <begin position="797"/>
        <end position="840"/>
    </location>
</feature>
<feature type="repeat" description="Hemopexin 2">
    <location>
        <begin position="841"/>
        <end position="888"/>
    </location>
</feature>
<feature type="region of interest" description="Disordered" evidence="4">
    <location>
        <begin position="110"/>
        <end position="764"/>
    </location>
</feature>
<feature type="region of interest" description="37 X 8 AA repeats of K-X-P-X-P-T-T-X">
    <location>
        <begin position="317"/>
        <end position="618"/>
    </location>
</feature>
<feature type="compositionally biased region" description="Low complexity" evidence="4">
    <location>
        <begin position="110"/>
        <end position="125"/>
    </location>
</feature>
<feature type="compositionally biased region" description="Low complexity" evidence="4">
    <location>
        <begin position="162"/>
        <end position="175"/>
    </location>
</feature>
<feature type="compositionally biased region" description="Basic and acidic residues" evidence="4">
    <location>
        <begin position="188"/>
        <end position="200"/>
    </location>
</feature>
<feature type="compositionally biased region" description="Pro residues" evidence="4">
    <location>
        <begin position="229"/>
        <end position="238"/>
    </location>
</feature>
<feature type="compositionally biased region" description="Low complexity" evidence="4">
    <location>
        <begin position="286"/>
        <end position="295"/>
    </location>
</feature>
<feature type="compositionally biased region" description="Basic and acidic residues" evidence="4">
    <location>
        <begin position="302"/>
        <end position="318"/>
    </location>
</feature>
<feature type="compositionally biased region" description="Polar residues" evidence="4">
    <location>
        <begin position="319"/>
        <end position="328"/>
    </location>
</feature>
<feature type="compositionally biased region" description="Low complexity" evidence="4">
    <location>
        <begin position="329"/>
        <end position="339"/>
    </location>
</feature>
<feature type="compositionally biased region" description="Basic and acidic residues" evidence="4">
    <location>
        <begin position="364"/>
        <end position="399"/>
    </location>
</feature>
<feature type="compositionally biased region" description="Pro residues" evidence="4">
    <location>
        <begin position="400"/>
        <end position="426"/>
    </location>
</feature>
<feature type="compositionally biased region" description="Basic and acidic residues" evidence="4">
    <location>
        <begin position="427"/>
        <end position="550"/>
    </location>
</feature>
<feature type="compositionally biased region" description="Pro residues" evidence="4">
    <location>
        <begin position="551"/>
        <end position="562"/>
    </location>
</feature>
<feature type="compositionally biased region" description="Basic and acidic residues" evidence="4">
    <location>
        <begin position="563"/>
        <end position="614"/>
    </location>
</feature>
<feature type="compositionally biased region" description="Low complexity" evidence="4">
    <location>
        <begin position="615"/>
        <end position="624"/>
    </location>
</feature>
<feature type="compositionally biased region" description="Basic residues" evidence="4">
    <location>
        <begin position="672"/>
        <end position="699"/>
    </location>
</feature>
<feature type="compositionally biased region" description="Low complexity" evidence="4">
    <location>
        <begin position="700"/>
        <end position="712"/>
    </location>
</feature>
<feature type="compositionally biased region" description="Polar residues" evidence="4">
    <location>
        <begin position="713"/>
        <end position="735"/>
    </location>
</feature>
<feature type="site" description="Cleavage; by subtilisin-like proprotein convertase 4">
    <location>
        <begin position="955"/>
        <end position="956"/>
    </location>
</feature>
<feature type="glycosylation site" description="N-linked (GlcNAc...) asparagine" evidence="2">
    <location>
        <position position="109"/>
    </location>
</feature>
<feature type="glycosylation site" description="O-linked (GalNAc...) serine" evidence="1">
    <location>
        <position position="135"/>
    </location>
</feature>
<feature type="glycosylation site" description="O-linked (GalNAc...) threonine" evidence="1">
    <location>
        <position position="237"/>
    </location>
</feature>
<feature type="glycosylation site" description="O-linked (GalNAc...) threonine" evidence="1">
    <location>
        <position position="250"/>
    </location>
</feature>
<feature type="glycosylation site" description="O-linked (GalNAc...) threonine" evidence="1">
    <location>
        <position position="301"/>
    </location>
</feature>
<feature type="glycosylation site" description="O-linked (GalNAc...) serine" evidence="1">
    <location>
        <position position="302"/>
    </location>
</feature>
<feature type="glycosylation site" description="O-linked (GalNAc...) threonine" evidence="1">
    <location>
        <position position="306"/>
    </location>
</feature>
<feature type="glycosylation site" description="O-linked (GalNAc...) serine" evidence="1">
    <location>
        <position position="313"/>
    </location>
</feature>
<feature type="glycosylation site" description="O-linked (GalNAc...) serine" evidence="1">
    <location>
        <position position="327"/>
    </location>
</feature>
<feature type="glycosylation site" description="O-linked (GalNAc...) threonine" evidence="1">
    <location>
        <position position="330"/>
    </location>
</feature>
<feature type="glycosylation site" description="O-linked (GalNAc...) threonine" evidence="1">
    <location>
        <position position="338"/>
    </location>
</feature>
<feature type="glycosylation site" description="O-linked (GalNAc...) threonine" evidence="1">
    <location>
        <position position="354"/>
    </location>
</feature>
<feature type="glycosylation site" description="O-linked (GalNAc...) threonine" evidence="1">
    <location>
        <position position="362"/>
    </location>
</feature>
<feature type="glycosylation site" description="O-linked (GalNAc...) threonine" evidence="1">
    <location>
        <position position="369"/>
    </location>
</feature>
<feature type="glycosylation site" description="O-linked (GalNAc...) threonine" evidence="1">
    <location>
        <position position="377"/>
    </location>
</feature>
<feature type="glycosylation site" description="O-linked (GalNAc...) threonine" evidence="1">
    <location>
        <position position="378"/>
    </location>
</feature>
<feature type="glycosylation site" description="O-linked (GalNAc...) threonine" evidence="1">
    <location>
        <position position="385"/>
    </location>
</feature>
<feature type="glycosylation site" description="O-linked (GalNAc...) threonine" evidence="1">
    <location>
        <position position="386"/>
    </location>
</feature>
<feature type="glycosylation site" description="O-linked (GalNAc...) threonine" evidence="1">
    <location>
        <position position="393"/>
    </location>
</feature>
<feature type="glycosylation site" description="O-linked (GalNAc...) threonine" evidence="1">
    <location>
        <position position="394"/>
    </location>
</feature>
<feature type="glycosylation site" description="O-linked (GalNAc...) threonine" evidence="1">
    <location>
        <position position="416"/>
    </location>
</feature>
<feature type="glycosylation site" description="O-linked (GalNAc...) threonine" evidence="1">
    <location>
        <position position="417"/>
    </location>
</feature>
<feature type="glycosylation site" description="O-linked (GalNAc...) threonine" evidence="1">
    <location>
        <position position="424"/>
    </location>
</feature>
<feature type="glycosylation site" description="O-linked (GalNAc...) threonine" evidence="1">
    <location>
        <position position="432"/>
    </location>
</feature>
<feature type="glycosylation site" description="O-linked (GalNAc...) threonine" evidence="1">
    <location>
        <position position="433"/>
    </location>
</feature>
<feature type="glycosylation site" description="O-linked (GalNAc...) threonine" evidence="1">
    <location>
        <position position="440"/>
    </location>
</feature>
<feature type="glycosylation site" description="O-linked (GalNAc...) threonine" evidence="1">
    <location>
        <position position="441"/>
    </location>
</feature>
<feature type="glycosylation site" description="O-linked (GalNAc...) threonine" evidence="1">
    <location>
        <position position="448"/>
    </location>
</feature>
<feature type="glycosylation site" description="O-linked (GalNAc...) threonine" evidence="1">
    <location>
        <position position="472"/>
    </location>
</feature>
<feature type="glycosylation site" description="O-linked (GalNAc...) threonine" evidence="1">
    <location>
        <position position="480"/>
    </location>
</feature>
<feature type="glycosylation site" description="O-linked (GalNAc...) threonine" evidence="1">
    <location>
        <position position="481"/>
    </location>
</feature>
<feature type="glycosylation site" description="O-linked (GalNAc...) threonine" evidence="1">
    <location>
        <position position="488"/>
    </location>
</feature>
<feature type="glycosylation site" description="O-linked (GalNAc...) threonine" evidence="1">
    <location>
        <position position="489"/>
    </location>
</feature>
<feature type="glycosylation site" description="O-linked (GalNAc...) threonine" evidence="1">
    <location>
        <position position="496"/>
    </location>
</feature>
<feature type="glycosylation site" description="O-linked (GalNAc...) threonine" evidence="1">
    <location>
        <position position="497"/>
    </location>
</feature>
<feature type="glycosylation site" description="O-linked (GalNAc...) threonine" evidence="1">
    <location>
        <position position="504"/>
    </location>
</feature>
<feature type="glycosylation site" description="O-linked (GalNAc...) threonine" evidence="1">
    <location>
        <position position="505"/>
    </location>
</feature>
<feature type="glycosylation site" description="O-linked (GalNAc...) threonine" evidence="1">
    <location>
        <position position="512"/>
    </location>
</feature>
<feature type="glycosylation site" description="O-linked (GalNAc...) threonine" evidence="1">
    <location>
        <position position="520"/>
    </location>
</feature>
<feature type="glycosylation site" description="O-linked (GalNAc...) threonine" evidence="1">
    <location>
        <position position="521"/>
    </location>
</feature>
<feature type="glycosylation site" description="O-linked (GalNAc...) threonine" evidence="1">
    <location>
        <position position="528"/>
    </location>
</feature>
<feature type="glycosylation site" description="O-linked (GalNAc...) threonine" evidence="1">
    <location>
        <position position="529"/>
    </location>
</feature>
<feature type="glycosylation site" description="O-linked (GalNAc...) threonine" evidence="1">
    <location>
        <position position="553"/>
    </location>
</feature>
<feature type="glycosylation site" description="O-linked (GalNAc...) threonine" evidence="1">
    <location>
        <position position="560"/>
    </location>
</feature>
<feature type="glycosylation site" description="O-linked (GalNAc...) threonine" evidence="1">
    <location>
        <position position="561"/>
    </location>
</feature>
<feature type="glycosylation site" description="O-linked (GalNAc...) threonine" evidence="1">
    <location>
        <position position="568"/>
    </location>
</feature>
<feature type="glycosylation site" description="O-linked (GalNAc...) threonine" evidence="1">
    <location>
        <position position="569"/>
    </location>
</feature>
<feature type="glycosylation site" description="O-linked (GalNAc...) threonine" evidence="1">
    <location>
        <position position="576"/>
    </location>
</feature>
<feature type="glycosylation site" description="O-linked (GalNAc...) threonine" evidence="1">
    <location>
        <position position="577"/>
    </location>
</feature>
<feature type="glycosylation site" description="O-linked (GalNAc...) threonine" evidence="1">
    <location>
        <position position="592"/>
    </location>
</feature>
<feature type="glycosylation site" description="O-linked (GalNAc...) threonine" evidence="1">
    <location>
        <position position="600"/>
    </location>
</feature>
<feature type="glycosylation site" description="O-linked (GalNAc...) threonine" evidence="1">
    <location>
        <position position="601"/>
    </location>
</feature>
<feature type="glycosylation site" description="O-linked (GalNAc...) threonine" evidence="1">
    <location>
        <position position="622"/>
    </location>
</feature>
<feature type="glycosylation site" description="O-linked (GalNAc...) threonine" evidence="1">
    <location>
        <position position="624"/>
    </location>
</feature>
<feature type="glycosylation site" description="O-linked (GalNAc...) threonine" evidence="1">
    <location>
        <position position="628"/>
    </location>
</feature>
<feature type="glycosylation site" description="O-linked (GalNAc...) threonine" evidence="1">
    <location>
        <position position="629"/>
    </location>
</feature>
<feature type="glycosylation site" description="O-linked (GalNAc...) threonine" evidence="1">
    <location>
        <position position="692"/>
    </location>
</feature>
<feature type="glycosylation site" description="N-linked (GlcNAc...) asparagine" evidence="1">
    <location>
        <position position="808"/>
    </location>
</feature>
<feature type="glycosylation site" description="O-linked (GalNAc...) threonine" evidence="1">
    <location>
        <position position="810"/>
    </location>
</feature>
<feature type="glycosylation site" description="N-linked (GlcNAc...) asparagine" evidence="2">
    <location>
        <position position="938"/>
    </location>
</feature>
<feature type="disulfide bond" description="Alternate" evidence="3">
    <location>
        <begin position="30"/>
        <end position="46"/>
    </location>
</feature>
<feature type="disulfide bond" evidence="3">
    <location>
        <begin position="30"/>
        <end position="34"/>
    </location>
</feature>
<feature type="disulfide bond" description="Alternate" evidence="3">
    <location>
        <begin position="34"/>
        <end position="64"/>
    </location>
</feature>
<feature type="disulfide bond" description="Alternate" evidence="3">
    <location>
        <begin position="44"/>
        <end position="57"/>
    </location>
</feature>
<feature type="disulfide bond" evidence="3">
    <location>
        <begin position="44"/>
        <end position="46"/>
    </location>
</feature>
<feature type="disulfide bond" evidence="3">
    <location>
        <begin position="50"/>
        <end position="56"/>
    </location>
</feature>
<feature type="disulfide bond" evidence="3">
    <location>
        <begin position="57"/>
        <end position="64"/>
    </location>
</feature>
<feature type="disulfide bond" description="Alternate" evidence="3">
    <location>
        <begin position="70"/>
        <end position="86"/>
    </location>
</feature>
<feature type="disulfide bond" evidence="3">
    <location>
        <begin position="70"/>
        <end position="74"/>
    </location>
</feature>
<feature type="disulfide bond" description="Alternate" evidence="3">
    <location>
        <begin position="74"/>
        <end position="104"/>
    </location>
</feature>
<feature type="disulfide bond" description="Alternate" evidence="3">
    <location>
        <begin position="84"/>
        <end position="97"/>
    </location>
</feature>
<feature type="disulfide bond" evidence="3">
    <location>
        <begin position="84"/>
        <end position="86"/>
    </location>
</feature>
<feature type="disulfide bond" evidence="3">
    <location>
        <begin position="90"/>
        <end position="96"/>
    </location>
</feature>
<feature type="disulfide bond" evidence="3">
    <location>
        <begin position="97"/>
        <end position="104"/>
    </location>
</feature>
<feature type="disulfide bond" evidence="3 7">
    <location>
        <begin position="795"/>
        <end position="1053"/>
    </location>
</feature>
<feature type="splice variant" id="VSP_016471" description="In isoform B and isoform D." evidence="9">
    <location>
        <begin position="26"/>
        <end position="66"/>
    </location>
</feature>
<feature type="splice variant" id="VSP_016472" description="In isoform C, isoform D and isoform E." evidence="8">
    <location>
        <begin position="107"/>
        <end position="194"/>
    </location>
</feature>
<feature type="splice variant" id="VSP_016473" description="In isoform E." evidence="8">
    <location>
        <begin position="224"/>
        <end position="766"/>
    </location>
</feature>
<feature type="mutagenesis site" description="Not cleaved by subtilisin-like proprotein convertase. Not cleaved by subtilisin-like proprotein convertase; when associated with A-1053." evidence="7">
    <original>C</original>
    <variation>A</variation>
    <location>
        <position position="795"/>
    </location>
</feature>
<feature type="mutagenesis site" description="Cleaved by subtilisin-like proprotein convertase." evidence="7">
    <original>CNC</original>
    <variation>ANA</variation>
    <location>
        <begin position="851"/>
        <end position="853"/>
    </location>
</feature>
<feature type="mutagenesis site" description="Cleaved by subtilisin-like proprotein convertase.">
    <original>C</original>
    <variation>A</variation>
    <location>
        <position position="851"/>
    </location>
</feature>
<feature type="mutagenesis site" description="Cleaved by subtilisin-like proprotein convertase." evidence="7">
    <original>C</original>
    <variation>A</variation>
    <location>
        <position position="930"/>
    </location>
</feature>
<feature type="mutagenesis site" description="Not cleaved by subtilisin-like proprotein convertase 4." evidence="7">
    <original>RRRRFER</original>
    <variation>ARARFEA</variation>
    <location>
        <begin position="949"/>
        <end position="955"/>
    </location>
</feature>
<feature type="mutagenesis site" description="Cleaved by subtilisin-like proprotein convertase 4." evidence="7">
    <original>RRR</original>
    <variation>ARA</variation>
    <location>
        <begin position="949"/>
        <end position="951"/>
    </location>
</feature>
<feature type="mutagenesis site" description="Not cleaved by subtilisin-like proprotein convertase 4.">
    <original>R</original>
    <variation>A</variation>
    <location>
        <position position="955"/>
    </location>
</feature>
<feature type="mutagenesis site" description="Not cleaved by subtilisin-like proprotein convertase 4. Not cleaved by subtilisin-like proprotein convertase; when associated with A-795." evidence="7">
    <original>C</original>
    <variation>A</variation>
    <location>
        <position position="1053"/>
    </location>
</feature>
<feature type="sequence conflict" description="In Ref. 2; BAE28900." evidence="9" ref="2">
    <original>SP</original>
    <variation>TT</variation>
    <location>
        <begin position="65"/>
        <end position="66"/>
    </location>
</feature>
<feature type="sequence conflict" description="In Ref. 1; BAA92310." evidence="9" ref="1">
    <original>S</original>
    <variation>A</variation>
    <location>
        <position position="703"/>
    </location>
</feature>
<feature type="sequence conflict" description="In Ref. 1; BAA92310." evidence="9" ref="1">
    <original>Q</original>
    <variation>R</variation>
    <location>
        <position position="780"/>
    </location>
</feature>
<feature type="sequence conflict" description="In Ref. 1; BAA92310." evidence="9" ref="1">
    <original>L</original>
    <variation>P</variation>
    <location>
        <position position="788"/>
    </location>
</feature>
<gene>
    <name type="primary">Prg4</name>
    <name type="synonym">Msf</name>
    <name type="synonym">Szp</name>
</gene>
<evidence type="ECO:0000250" key="1">
    <source>
        <dbReference type="UniProtKB" id="Q92954"/>
    </source>
</evidence>
<evidence type="ECO:0000255" key="2"/>
<evidence type="ECO:0000255" key="3">
    <source>
        <dbReference type="PROSITE-ProRule" id="PRU00350"/>
    </source>
</evidence>
<evidence type="ECO:0000256" key="4">
    <source>
        <dbReference type="SAM" id="MobiDB-lite"/>
    </source>
</evidence>
<evidence type="ECO:0000269" key="5">
    <source>
    </source>
</evidence>
<evidence type="ECO:0000269" key="6">
    <source>
    </source>
</evidence>
<evidence type="ECO:0000269" key="7">
    <source>
    </source>
</evidence>
<evidence type="ECO:0000303" key="8">
    <source>
    </source>
</evidence>
<evidence type="ECO:0000305" key="9"/>
<keyword id="KW-0025">Alternative splicing</keyword>
<keyword id="KW-1015">Disulfide bond</keyword>
<keyword id="KW-0325">Glycoprotein</keyword>
<keyword id="KW-0654">Proteoglycan</keyword>
<keyword id="KW-1185">Reference proteome</keyword>
<keyword id="KW-0677">Repeat</keyword>
<keyword id="KW-0964">Secreted</keyword>
<keyword id="KW-0732">Signal</keyword>
<organism>
    <name type="scientific">Mus musculus</name>
    <name type="common">Mouse</name>
    <dbReference type="NCBI Taxonomy" id="10090"/>
    <lineage>
        <taxon>Eukaryota</taxon>
        <taxon>Metazoa</taxon>
        <taxon>Chordata</taxon>
        <taxon>Craniata</taxon>
        <taxon>Vertebrata</taxon>
        <taxon>Euteleostomi</taxon>
        <taxon>Mammalia</taxon>
        <taxon>Eutheria</taxon>
        <taxon>Euarchontoglires</taxon>
        <taxon>Glires</taxon>
        <taxon>Rodentia</taxon>
        <taxon>Myomorpha</taxon>
        <taxon>Muroidea</taxon>
        <taxon>Muridae</taxon>
        <taxon>Murinae</taxon>
        <taxon>Mus</taxon>
        <taxon>Mus</taxon>
    </lineage>
</organism>
<accession>Q9JM99</accession>
<accession>Q3UEL1</accession>
<accession>Q3V198</accession>
<name>PRG4_MOUSE</name>
<protein>
    <recommendedName>
        <fullName>Proteoglycan 4</fullName>
    </recommendedName>
    <alternativeName>
        <fullName>Lubricin</fullName>
    </alternativeName>
    <alternativeName>
        <fullName>Megakaryocyte-stimulating factor</fullName>
    </alternativeName>
    <alternativeName>
        <fullName>Superficial zone proteoglycan</fullName>
    </alternativeName>
    <component>
        <recommendedName>
            <fullName>Proteoglycan 4 C-terminal part</fullName>
        </recommendedName>
    </component>
</protein>
<proteinExistence type="evidence at protein level"/>
<sequence length="1054" mass="115996">MGWKILPVCLSLLLPVVLIQQVSSQDLSSCAGRCGEGYSRDATCNCDYNCQHYMECCPDFKRVCSPELSCKGRCFESFARGRECDCDSQCKQYGKCCADYDSFCEEVHNSTSPSSKTAPTPAGASDTIKSTTKRSPKSPTTRTIKVVESEELTEEHSDSENQESSSSSSSSSSTIRKIKSSKNSANRELQKNPNVKDNKKNTPKKKPNPEPPAVDEAGSGLDNGEFKLTPPPPDPPTTPHSKVATSPKTTAAKPVTPKPSLAPNSETSKEASLASNKETTVETKETTATNKQSSASKKKTTSVKETRSAEKTSDKDVEPTSTTPKNSAPTTTKKPVTTTKESKFLPLPQEPEPTTAKEPPPTTKKPEPTTRKEPEPTTPKEPEPTTPKEPEPTTPKEPEPTTPKEPPPTTKKPEPTTPKEPGPTTPKEPEPTTTKEPEPTTTKEPESTTRKEPEPTTPKEPEPTTPKEPEPTTLKEPEPTTPKEPEPTTPKEPEPTTPKEPEPTTPKEPEPTTPKEPEPTTPKEPEPTTPKEPEPTTPKEPEPTTPKKPEPTTPKEPVPTTPKEPEPTTPKEPEPTTPKEPEPTTRKEPEPTTPKEPEPTTPKEPEPTTPKKPEPTTTSPKTTTLKATTLAPKVTAPAEEIQNKPEETTPASEDSDDSKTTLKPQKPTKAPKPTKKPTKAPKKPTSTKKPKTPKTRKPKTTPSPLKTTSATPELNTTPLEVMLPTTTIPKQTPNPETAEVNPDHEDADGGEGEKPLIPGPPVLFPTAIPGTDLLAGRLNQGININPMLSDETNLCNGKPVDGLTTLRNGTLVAFRGHYFWMLNPFRPPSPPRRITEVWGIPSPIDTVFTRCNCEGKTFFFKDSQYWRFTNDVVDPGYPKQIVKGFGGLTGKIVAALSIAKYKDRPESVYFFKRGGNIQQYTYKQEPMKKCTGRRPAINYSVYGEAAQVRRRRFERAVGPFQTHTFRIHYSVPMRVSYQDKGFLHNEVKVSTMWRGFPNVVTSAITLPNIRKPDGYDYYAFSKDQYYNIDVPTRTARAITTRSGQTLSKIWYNCP</sequence>